<feature type="chain" id="PRO_0000081004" description="Alginate biosynthesis transcriptional regulatory protein AlgB">
    <location>
        <begin position="1"/>
        <end position="449"/>
    </location>
</feature>
<feature type="domain" description="Response regulatory" evidence="2">
    <location>
        <begin position="10"/>
        <end position="124"/>
    </location>
</feature>
<feature type="domain" description="Sigma-54 factor interaction" evidence="3">
    <location>
        <begin position="147"/>
        <end position="376"/>
    </location>
</feature>
<feature type="DNA-binding region" description="H-T-H motif" evidence="1">
    <location>
        <begin position="426"/>
        <end position="445"/>
    </location>
</feature>
<feature type="binding site" evidence="3">
    <location>
        <begin position="175"/>
        <end position="182"/>
    </location>
    <ligand>
        <name>ATP</name>
        <dbReference type="ChEBI" id="CHEBI:30616"/>
    </ligand>
</feature>
<feature type="binding site" evidence="3">
    <location>
        <begin position="238"/>
        <end position="247"/>
    </location>
    <ligand>
        <name>ATP</name>
        <dbReference type="ChEBI" id="CHEBI:30616"/>
    </ligand>
</feature>
<feature type="modified residue" description="4-aspartylphosphate" evidence="2 4">
    <location>
        <position position="59"/>
    </location>
</feature>
<feature type="mutagenesis site" description="No phosphorylation; no effect on alginate production." evidence="4">
    <original>D</original>
    <variation>N</variation>
    <location>
        <position position="59"/>
    </location>
</feature>
<proteinExistence type="evidence at protein level"/>
<accession>P23747</accession>
<comment type="function">
    <text>Member of the two-component regulatory system AlgB/KinB involved in regulation of alginate biosynthesis genes. Positive regulator of the alginate biosynthetic gene AlgD.</text>
</comment>
<comment type="pathway">
    <text>Glycan biosynthesis; alginate biosynthesis [regulation].</text>
</comment>
<comment type="PTM">
    <text evidence="4">Phosphorylated by KinB.</text>
</comment>
<comment type="miscellaneous">
    <text>In vivo phosphorylation of AlgB is not required for its role in alginate production. The mechanism by which it activates AlgD appears not to be mediated by conventional phosphorylation-dependent signal transduction.</text>
</comment>
<sequence>METTSEKQGRILLVDDESAILRTFRYCLEDEGYSVATASSAPQAEALLQRQVFDLCFLDLRLGEDNGLDVLAQMRVQAPWMRVVIVTAHSAVDTAVDAMQAGAVDYLVKPCSPDQLRLAAAKQLEVRQLTARLEALEDEVRRQGDGLESHSPAMAAVLETARQVAATDANILILGESGSGKGELARAIHTWSKRAKKPQVTINCPSLTAELMESELFGHSRGAFTGATESTLGRVSQADGGTLFLDEIGDFPLTLQPKLLRFIQDKEYERVGDPVTRRADVRILAATNRDLGAMVAQGQFREDLLYRLNVIVLNLPPLRERAEDILGLAERFLARFVKDYGRPARGFSEAAREAMRQYPWPGNVRELRNVIERASIICNQELVDVDHLGFSAAQSASSAPRIGESLSLEDLEKAHITAVMASSATLDQAAKTLGIDASTLYRKRKQYGL</sequence>
<dbReference type="EMBL" id="M62902">
    <property type="protein sequence ID" value="AAA25700.1"/>
    <property type="molecule type" value="Genomic_DNA"/>
</dbReference>
<dbReference type="EMBL" id="M82823">
    <property type="status" value="NOT_ANNOTATED_CDS"/>
    <property type="molecule type" value="Genomic_DNA"/>
</dbReference>
<dbReference type="EMBL" id="AE004091">
    <property type="protein sequence ID" value="AAG08868.1"/>
    <property type="molecule type" value="Genomic_DNA"/>
</dbReference>
<dbReference type="PIR" id="A38449">
    <property type="entry name" value="A38449"/>
</dbReference>
<dbReference type="RefSeq" id="NP_254170.1">
    <property type="nucleotide sequence ID" value="NC_002516.2"/>
</dbReference>
<dbReference type="RefSeq" id="WP_003102840.1">
    <property type="nucleotide sequence ID" value="NZ_QZGE01000012.1"/>
</dbReference>
<dbReference type="SMR" id="P23747"/>
<dbReference type="STRING" id="208964.PA5483"/>
<dbReference type="PaxDb" id="208964-PA5483"/>
<dbReference type="GeneID" id="877696"/>
<dbReference type="KEGG" id="pae:PA5483"/>
<dbReference type="PATRIC" id="fig|208964.12.peg.5748"/>
<dbReference type="PseudoCAP" id="PA5483"/>
<dbReference type="HOGENOM" id="CLU_000445_0_6_6"/>
<dbReference type="InParanoid" id="P23747"/>
<dbReference type="OrthoDB" id="9804019at2"/>
<dbReference type="PhylomeDB" id="P23747"/>
<dbReference type="BioCyc" id="PAER208964:G1FZ6-5610-MONOMER"/>
<dbReference type="UniPathway" id="UPA00286"/>
<dbReference type="Proteomes" id="UP000002438">
    <property type="component" value="Chromosome"/>
</dbReference>
<dbReference type="GO" id="GO:0032993">
    <property type="term" value="C:protein-DNA complex"/>
    <property type="evidence" value="ECO:0000318"/>
    <property type="project" value="GO_Central"/>
</dbReference>
<dbReference type="GO" id="GO:0005524">
    <property type="term" value="F:ATP binding"/>
    <property type="evidence" value="ECO:0007669"/>
    <property type="project" value="UniProtKB-KW"/>
</dbReference>
<dbReference type="GO" id="GO:0016887">
    <property type="term" value="F:ATP hydrolysis activity"/>
    <property type="evidence" value="ECO:0007669"/>
    <property type="project" value="InterPro"/>
</dbReference>
<dbReference type="GO" id="GO:0000987">
    <property type="term" value="F:cis-regulatory region sequence-specific DNA binding"/>
    <property type="evidence" value="ECO:0000318"/>
    <property type="project" value="GO_Central"/>
</dbReference>
<dbReference type="GO" id="GO:0001216">
    <property type="term" value="F:DNA-binding transcription activator activity"/>
    <property type="evidence" value="ECO:0000318"/>
    <property type="project" value="GO_Central"/>
</dbReference>
<dbReference type="GO" id="GO:0042121">
    <property type="term" value="P:alginic acid biosynthetic process"/>
    <property type="evidence" value="ECO:0000315"/>
    <property type="project" value="PseudoCAP"/>
</dbReference>
<dbReference type="GO" id="GO:1900232">
    <property type="term" value="P:negative regulation of single-species biofilm formation on inanimate substrate"/>
    <property type="evidence" value="ECO:0000315"/>
    <property type="project" value="PseudoCAP"/>
</dbReference>
<dbReference type="GO" id="GO:0000160">
    <property type="term" value="P:phosphorelay signal transduction system"/>
    <property type="evidence" value="ECO:0007669"/>
    <property type="project" value="UniProtKB-KW"/>
</dbReference>
<dbReference type="GO" id="GO:2000147">
    <property type="term" value="P:positive regulation of cell motility"/>
    <property type="evidence" value="ECO:0000315"/>
    <property type="project" value="PseudoCAP"/>
</dbReference>
<dbReference type="GO" id="GO:0045893">
    <property type="term" value="P:positive regulation of DNA-templated transcription"/>
    <property type="evidence" value="ECO:0000315"/>
    <property type="project" value="PseudoCAP"/>
</dbReference>
<dbReference type="GO" id="GO:0045862">
    <property type="term" value="P:positive regulation of proteolysis"/>
    <property type="evidence" value="ECO:0000315"/>
    <property type="project" value="PseudoCAP"/>
</dbReference>
<dbReference type="GO" id="GO:1900378">
    <property type="term" value="P:positive regulation of secondary metabolite biosynthetic process"/>
    <property type="evidence" value="ECO:0000315"/>
    <property type="project" value="PseudoCAP"/>
</dbReference>
<dbReference type="CDD" id="cd00009">
    <property type="entry name" value="AAA"/>
    <property type="match status" value="1"/>
</dbReference>
<dbReference type="FunFam" id="3.40.50.300:FF:000006">
    <property type="entry name" value="DNA-binding transcriptional regulator NtrC"/>
    <property type="match status" value="1"/>
</dbReference>
<dbReference type="FunFam" id="1.10.8.60:FF:000120">
    <property type="entry name" value="Sigma-54-dependent Fis family transcriptional regulator"/>
    <property type="match status" value="1"/>
</dbReference>
<dbReference type="Gene3D" id="1.10.8.60">
    <property type="match status" value="1"/>
</dbReference>
<dbReference type="Gene3D" id="3.40.50.2300">
    <property type="match status" value="1"/>
</dbReference>
<dbReference type="Gene3D" id="1.10.10.60">
    <property type="entry name" value="Homeodomain-like"/>
    <property type="match status" value="1"/>
</dbReference>
<dbReference type="Gene3D" id="3.40.50.300">
    <property type="entry name" value="P-loop containing nucleotide triphosphate hydrolases"/>
    <property type="match status" value="1"/>
</dbReference>
<dbReference type="InterPro" id="IPR003593">
    <property type="entry name" value="AAA+_ATPase"/>
</dbReference>
<dbReference type="InterPro" id="IPR011006">
    <property type="entry name" value="CheY-like_superfamily"/>
</dbReference>
<dbReference type="InterPro" id="IPR009057">
    <property type="entry name" value="Homeodomain-like_sf"/>
</dbReference>
<dbReference type="InterPro" id="IPR002197">
    <property type="entry name" value="HTH_Fis"/>
</dbReference>
<dbReference type="InterPro" id="IPR027417">
    <property type="entry name" value="P-loop_NTPase"/>
</dbReference>
<dbReference type="InterPro" id="IPR001789">
    <property type="entry name" value="Sig_transdc_resp-reg_receiver"/>
</dbReference>
<dbReference type="InterPro" id="IPR002078">
    <property type="entry name" value="Sigma_54_int"/>
</dbReference>
<dbReference type="InterPro" id="IPR025662">
    <property type="entry name" value="Sigma_54_int_dom_ATP-bd_1"/>
</dbReference>
<dbReference type="InterPro" id="IPR025943">
    <property type="entry name" value="Sigma_54_int_dom_ATP-bd_2"/>
</dbReference>
<dbReference type="InterPro" id="IPR025944">
    <property type="entry name" value="Sigma_54_int_dom_CS"/>
</dbReference>
<dbReference type="PANTHER" id="PTHR32071:SF113">
    <property type="entry name" value="ALGINATE BIOSYNTHESIS TRANSCRIPTIONAL REGULATORY PROTEIN ALGB"/>
    <property type="match status" value="1"/>
</dbReference>
<dbReference type="PANTHER" id="PTHR32071">
    <property type="entry name" value="TRANSCRIPTIONAL REGULATORY PROTEIN"/>
    <property type="match status" value="1"/>
</dbReference>
<dbReference type="Pfam" id="PF02954">
    <property type="entry name" value="HTH_8"/>
    <property type="match status" value="1"/>
</dbReference>
<dbReference type="Pfam" id="PF00072">
    <property type="entry name" value="Response_reg"/>
    <property type="match status" value="1"/>
</dbReference>
<dbReference type="Pfam" id="PF00158">
    <property type="entry name" value="Sigma54_activat"/>
    <property type="match status" value="1"/>
</dbReference>
<dbReference type="SMART" id="SM00382">
    <property type="entry name" value="AAA"/>
    <property type="match status" value="1"/>
</dbReference>
<dbReference type="SMART" id="SM00448">
    <property type="entry name" value="REC"/>
    <property type="match status" value="1"/>
</dbReference>
<dbReference type="SUPFAM" id="SSF52172">
    <property type="entry name" value="CheY-like"/>
    <property type="match status" value="1"/>
</dbReference>
<dbReference type="SUPFAM" id="SSF46689">
    <property type="entry name" value="Homeodomain-like"/>
    <property type="match status" value="1"/>
</dbReference>
<dbReference type="SUPFAM" id="SSF52540">
    <property type="entry name" value="P-loop containing nucleoside triphosphate hydrolases"/>
    <property type="match status" value="1"/>
</dbReference>
<dbReference type="PROSITE" id="PS50110">
    <property type="entry name" value="RESPONSE_REGULATORY"/>
    <property type="match status" value="1"/>
</dbReference>
<dbReference type="PROSITE" id="PS00675">
    <property type="entry name" value="SIGMA54_INTERACT_1"/>
    <property type="match status" value="1"/>
</dbReference>
<dbReference type="PROSITE" id="PS00676">
    <property type="entry name" value="SIGMA54_INTERACT_2"/>
    <property type="match status" value="1"/>
</dbReference>
<dbReference type="PROSITE" id="PS00688">
    <property type="entry name" value="SIGMA54_INTERACT_3"/>
    <property type="match status" value="1"/>
</dbReference>
<dbReference type="PROSITE" id="PS50045">
    <property type="entry name" value="SIGMA54_INTERACT_4"/>
    <property type="match status" value="1"/>
</dbReference>
<reference key="1">
    <citation type="journal article" date="1991" name="J. Bacteriol.">
        <title>Pseudomonas aeruginosa AlgB, a two-component response regulator of the NtrC family, is required for algD transcription.</title>
        <authorList>
            <person name="Wozniak D.J."/>
            <person name="Ohman D.E."/>
        </authorList>
    </citation>
    <scope>NUCLEOTIDE SEQUENCE [GENOMIC DNA]</scope>
    <source>
        <strain>FRD1</strain>
    </source>
</reference>
<reference key="2">
    <citation type="journal article" date="1992" name="Mol. Microbiol.">
        <title>Pseudomonas aeruginosa AlgB, which modulates the expression of alginate, is a member of the NtrC subclass of prokaryotic regulators.</title>
        <authorList>
            <person name="Goldberg J.B."/>
            <person name="Dahnke T."/>
        </authorList>
    </citation>
    <scope>NUCLEOTIDE SEQUENCE [GENOMIC DNA]</scope>
</reference>
<reference key="3">
    <citation type="journal article" date="2000" name="Nature">
        <title>Complete genome sequence of Pseudomonas aeruginosa PAO1, an opportunistic pathogen.</title>
        <authorList>
            <person name="Stover C.K."/>
            <person name="Pham X.-Q.T."/>
            <person name="Erwin A.L."/>
            <person name="Mizoguchi S.D."/>
            <person name="Warrener P."/>
            <person name="Hickey M.J."/>
            <person name="Brinkman F.S.L."/>
            <person name="Hufnagle W.O."/>
            <person name="Kowalik D.J."/>
            <person name="Lagrou M."/>
            <person name="Garber R.L."/>
            <person name="Goltry L."/>
            <person name="Tolentino E."/>
            <person name="Westbrock-Wadman S."/>
            <person name="Yuan Y."/>
            <person name="Brody L.L."/>
            <person name="Coulter S.N."/>
            <person name="Folger K.R."/>
            <person name="Kas A."/>
            <person name="Larbig K."/>
            <person name="Lim R.M."/>
            <person name="Smith K.A."/>
            <person name="Spencer D.H."/>
            <person name="Wong G.K.-S."/>
            <person name="Wu Z."/>
            <person name="Paulsen I.T."/>
            <person name="Reizer J."/>
            <person name="Saier M.H. Jr."/>
            <person name="Hancock R.E.W."/>
            <person name="Lory S."/>
            <person name="Olson M.V."/>
        </authorList>
    </citation>
    <scope>NUCLEOTIDE SEQUENCE [LARGE SCALE GENOMIC DNA]</scope>
    <source>
        <strain>ATCC 15692 / DSM 22644 / CIP 104116 / JCM 14847 / LMG 12228 / 1C / PRS 101 / PAO1</strain>
    </source>
</reference>
<reference key="4">
    <citation type="journal article" date="1998" name="J. Bacteriol.">
        <title>Phosphorylation-independent activity of the response regulators AlgB and AlgR in promoting alginate biosynthesis in mucoid Pseudomonas aeruginosa.</title>
        <authorList>
            <person name="Ma S."/>
            <person name="Selvaraj U."/>
            <person name="Ohman D.E."/>
            <person name="Quarless R."/>
            <person name="Hassett D.J."/>
            <person name="Wozniak D.J."/>
        </authorList>
    </citation>
    <scope>CHARACTERIZATION</scope>
    <scope>PHOSPHORYLATION AT ASP-59</scope>
    <scope>MUTAGENESIS OF ASP-59</scope>
    <source>
        <strain>FRD1</strain>
    </source>
</reference>
<protein>
    <recommendedName>
        <fullName>Alginate biosynthesis transcriptional regulatory protein AlgB</fullName>
    </recommendedName>
</protein>
<organism>
    <name type="scientific">Pseudomonas aeruginosa (strain ATCC 15692 / DSM 22644 / CIP 104116 / JCM 14847 / LMG 12228 / 1C / PRS 101 / PAO1)</name>
    <dbReference type="NCBI Taxonomy" id="208964"/>
    <lineage>
        <taxon>Bacteria</taxon>
        <taxon>Pseudomonadati</taxon>
        <taxon>Pseudomonadota</taxon>
        <taxon>Gammaproteobacteria</taxon>
        <taxon>Pseudomonadales</taxon>
        <taxon>Pseudomonadaceae</taxon>
        <taxon>Pseudomonas</taxon>
    </lineage>
</organism>
<evidence type="ECO:0000250" key="1"/>
<evidence type="ECO:0000255" key="2">
    <source>
        <dbReference type="PROSITE-ProRule" id="PRU00169"/>
    </source>
</evidence>
<evidence type="ECO:0000255" key="3">
    <source>
        <dbReference type="PROSITE-ProRule" id="PRU00193"/>
    </source>
</evidence>
<evidence type="ECO:0000269" key="4">
    <source>
    </source>
</evidence>
<name>ALGB_PSEAE</name>
<keyword id="KW-0010">Activator</keyword>
<keyword id="KW-0016">Alginate biosynthesis</keyword>
<keyword id="KW-0067">ATP-binding</keyword>
<keyword id="KW-0238">DNA-binding</keyword>
<keyword id="KW-0547">Nucleotide-binding</keyword>
<keyword id="KW-0597">Phosphoprotein</keyword>
<keyword id="KW-1185">Reference proteome</keyword>
<keyword id="KW-0804">Transcription</keyword>
<keyword id="KW-0805">Transcription regulation</keyword>
<keyword id="KW-0902">Two-component regulatory system</keyword>
<gene>
    <name type="primary">algB</name>
    <name type="ordered locus">PA5483</name>
</gene>